<sequence length="311" mass="35460">MSQNQEISKKEQYNLNKLQKRLRRNVGEAIADFNMIEEGDRIMVCLSGGKDSYTMLEILRNLQQSAPINFSLVAVNLDQKQPGFPEHVLPEYLEKLGVEYKIVEENTYGIVKEKIPEGKTTCSLCSRLRRGILYRTATELGATKIALGHHRDDILQTLFLNMFYGGKMKGMPPKLMSDDGKHIVIRPLAYCREKDIQRFADAKAFPIIPCNLCGSQPNLQRQVIADMLRDWDKRYPGRIETMFSAMQNVVPSHLCDTNLFDFKGITHGSEVVNGGDLAFDREEIPLQPAGWQPEEDENQLDELRLNVVEVK</sequence>
<comment type="function">
    <text evidence="1">Catalyzes the ATP-dependent 2-thiolation of cytidine in position 32 of tRNA, to form 2-thiocytidine (s(2)C32). The sulfur atoms are provided by the cysteine/cysteine desulfurase (IscS) system.</text>
</comment>
<comment type="catalytic activity">
    <reaction evidence="1">
        <text>cytidine(32) in tRNA + S-sulfanyl-L-cysteinyl-[cysteine desulfurase] + AH2 + ATP = 2-thiocytidine(32) in tRNA + L-cysteinyl-[cysteine desulfurase] + A + AMP + diphosphate + H(+)</text>
        <dbReference type="Rhea" id="RHEA:57048"/>
        <dbReference type="Rhea" id="RHEA-COMP:10288"/>
        <dbReference type="Rhea" id="RHEA-COMP:12157"/>
        <dbReference type="Rhea" id="RHEA-COMP:12158"/>
        <dbReference type="Rhea" id="RHEA-COMP:14821"/>
        <dbReference type="ChEBI" id="CHEBI:13193"/>
        <dbReference type="ChEBI" id="CHEBI:15378"/>
        <dbReference type="ChEBI" id="CHEBI:17499"/>
        <dbReference type="ChEBI" id="CHEBI:29950"/>
        <dbReference type="ChEBI" id="CHEBI:30616"/>
        <dbReference type="ChEBI" id="CHEBI:33019"/>
        <dbReference type="ChEBI" id="CHEBI:61963"/>
        <dbReference type="ChEBI" id="CHEBI:82748"/>
        <dbReference type="ChEBI" id="CHEBI:141453"/>
        <dbReference type="ChEBI" id="CHEBI:456215"/>
    </reaction>
    <physiologicalReaction direction="left-to-right" evidence="1">
        <dbReference type="Rhea" id="RHEA:57049"/>
    </physiologicalReaction>
</comment>
<comment type="cofactor">
    <cofactor evidence="1">
        <name>Mg(2+)</name>
        <dbReference type="ChEBI" id="CHEBI:18420"/>
    </cofactor>
</comment>
<comment type="cofactor">
    <cofactor evidence="1">
        <name>[4Fe-4S] cluster</name>
        <dbReference type="ChEBI" id="CHEBI:49883"/>
    </cofactor>
    <text evidence="1">Binds 1 [4Fe-4S] cluster per subunit. The cluster is chelated by three Cys residues, the fourth Fe has a free coordination site that may bind a sulfur atom transferred from the persulfide of IscS.</text>
</comment>
<comment type="pathway">
    <text evidence="1">tRNA modification.</text>
</comment>
<comment type="subunit">
    <text evidence="1">Homodimer.</text>
</comment>
<comment type="subcellular location">
    <subcellularLocation>
        <location evidence="1">Cytoplasm</location>
    </subcellularLocation>
</comment>
<comment type="miscellaneous">
    <text evidence="1">The thiolation reaction likely consists of two steps: a first activation step by ATP to form an adenylated intermediate of the target base of tRNA, and a second nucleophilic substitution step of the sulfur (S) atom supplied by the hydrosulfide attached to the Fe-S cluster.</text>
</comment>
<comment type="similarity">
    <text evidence="1">Belongs to the TtcA family.</text>
</comment>
<feature type="chain" id="PRO_0000348726" description="tRNA-cytidine(32) 2-sulfurtransferase">
    <location>
        <begin position="1"/>
        <end position="311"/>
    </location>
</feature>
<feature type="short sequence motif" description="PP-loop motif" evidence="1">
    <location>
        <begin position="47"/>
        <end position="52"/>
    </location>
</feature>
<feature type="binding site" evidence="1">
    <location>
        <position position="122"/>
    </location>
    <ligand>
        <name>[4Fe-4S] cluster</name>
        <dbReference type="ChEBI" id="CHEBI:49883"/>
    </ligand>
</feature>
<feature type="binding site" evidence="1">
    <location>
        <position position="125"/>
    </location>
    <ligand>
        <name>[4Fe-4S] cluster</name>
        <dbReference type="ChEBI" id="CHEBI:49883"/>
    </ligand>
</feature>
<feature type="binding site" evidence="1">
    <location>
        <position position="213"/>
    </location>
    <ligand>
        <name>[4Fe-4S] cluster</name>
        <dbReference type="ChEBI" id="CHEBI:49883"/>
    </ligand>
</feature>
<protein>
    <recommendedName>
        <fullName evidence="1">tRNA-cytidine(32) 2-sulfurtransferase</fullName>
        <ecNumber evidence="1">2.8.1.-</ecNumber>
    </recommendedName>
    <alternativeName>
        <fullName evidence="1">Two-thiocytidine biosynthesis protein A</fullName>
    </alternativeName>
    <alternativeName>
        <fullName evidence="1">tRNA 2-thiocytidine biosynthesis protein TtcA</fullName>
    </alternativeName>
</protein>
<proteinExistence type="inferred from homology"/>
<gene>
    <name evidence="1" type="primary">ttcA</name>
    <name type="ordered locus">EcHS_A1461</name>
</gene>
<accession>A7ZZT7</accession>
<evidence type="ECO:0000255" key="1">
    <source>
        <dbReference type="HAMAP-Rule" id="MF_01850"/>
    </source>
</evidence>
<keyword id="KW-0004">4Fe-4S</keyword>
<keyword id="KW-0067">ATP-binding</keyword>
<keyword id="KW-0963">Cytoplasm</keyword>
<keyword id="KW-0408">Iron</keyword>
<keyword id="KW-0411">Iron-sulfur</keyword>
<keyword id="KW-0460">Magnesium</keyword>
<keyword id="KW-0479">Metal-binding</keyword>
<keyword id="KW-0547">Nucleotide-binding</keyword>
<keyword id="KW-0694">RNA-binding</keyword>
<keyword id="KW-0808">Transferase</keyword>
<keyword id="KW-0819">tRNA processing</keyword>
<keyword id="KW-0820">tRNA-binding</keyword>
<reference key="1">
    <citation type="journal article" date="2008" name="J. Bacteriol.">
        <title>The pangenome structure of Escherichia coli: comparative genomic analysis of E. coli commensal and pathogenic isolates.</title>
        <authorList>
            <person name="Rasko D.A."/>
            <person name="Rosovitz M.J."/>
            <person name="Myers G.S.A."/>
            <person name="Mongodin E.F."/>
            <person name="Fricke W.F."/>
            <person name="Gajer P."/>
            <person name="Crabtree J."/>
            <person name="Sebaihia M."/>
            <person name="Thomson N.R."/>
            <person name="Chaudhuri R."/>
            <person name="Henderson I.R."/>
            <person name="Sperandio V."/>
            <person name="Ravel J."/>
        </authorList>
    </citation>
    <scope>NUCLEOTIDE SEQUENCE [LARGE SCALE GENOMIC DNA]</scope>
    <source>
        <strain>HS</strain>
    </source>
</reference>
<organism>
    <name type="scientific">Escherichia coli O9:H4 (strain HS)</name>
    <dbReference type="NCBI Taxonomy" id="331112"/>
    <lineage>
        <taxon>Bacteria</taxon>
        <taxon>Pseudomonadati</taxon>
        <taxon>Pseudomonadota</taxon>
        <taxon>Gammaproteobacteria</taxon>
        <taxon>Enterobacterales</taxon>
        <taxon>Enterobacteriaceae</taxon>
        <taxon>Escherichia</taxon>
    </lineage>
</organism>
<dbReference type="EC" id="2.8.1.-" evidence="1"/>
<dbReference type="EMBL" id="CP000802">
    <property type="protein sequence ID" value="ABV05791.1"/>
    <property type="molecule type" value="Genomic_DNA"/>
</dbReference>
<dbReference type="RefSeq" id="WP_000081418.1">
    <property type="nucleotide sequence ID" value="NC_009800.1"/>
</dbReference>
<dbReference type="SMR" id="A7ZZT7"/>
<dbReference type="GeneID" id="75171471"/>
<dbReference type="KEGG" id="ecx:EcHS_A1461"/>
<dbReference type="HOGENOM" id="CLU_026481_0_0_6"/>
<dbReference type="GO" id="GO:0005737">
    <property type="term" value="C:cytoplasm"/>
    <property type="evidence" value="ECO:0007669"/>
    <property type="project" value="UniProtKB-SubCell"/>
</dbReference>
<dbReference type="GO" id="GO:0051539">
    <property type="term" value="F:4 iron, 4 sulfur cluster binding"/>
    <property type="evidence" value="ECO:0007669"/>
    <property type="project" value="UniProtKB-UniRule"/>
</dbReference>
<dbReference type="GO" id="GO:0005524">
    <property type="term" value="F:ATP binding"/>
    <property type="evidence" value="ECO:0007669"/>
    <property type="project" value="UniProtKB-UniRule"/>
</dbReference>
<dbReference type="GO" id="GO:0000287">
    <property type="term" value="F:magnesium ion binding"/>
    <property type="evidence" value="ECO:0007669"/>
    <property type="project" value="UniProtKB-UniRule"/>
</dbReference>
<dbReference type="GO" id="GO:0016783">
    <property type="term" value="F:sulfurtransferase activity"/>
    <property type="evidence" value="ECO:0007669"/>
    <property type="project" value="UniProtKB-UniRule"/>
</dbReference>
<dbReference type="GO" id="GO:0000049">
    <property type="term" value="F:tRNA binding"/>
    <property type="evidence" value="ECO:0007669"/>
    <property type="project" value="UniProtKB-KW"/>
</dbReference>
<dbReference type="GO" id="GO:0034227">
    <property type="term" value="P:tRNA thio-modification"/>
    <property type="evidence" value="ECO:0007669"/>
    <property type="project" value="UniProtKB-UniRule"/>
</dbReference>
<dbReference type="CDD" id="cd24138">
    <property type="entry name" value="TtcA-like"/>
    <property type="match status" value="1"/>
</dbReference>
<dbReference type="FunFam" id="3.40.50.620:FF:000046">
    <property type="entry name" value="tRNA-cytidine(32) 2-sulfurtransferase"/>
    <property type="match status" value="1"/>
</dbReference>
<dbReference type="Gene3D" id="3.40.50.620">
    <property type="entry name" value="HUPs"/>
    <property type="match status" value="1"/>
</dbReference>
<dbReference type="HAMAP" id="MF_01850">
    <property type="entry name" value="TtcA"/>
    <property type="match status" value="1"/>
</dbReference>
<dbReference type="InterPro" id="IPR014729">
    <property type="entry name" value="Rossmann-like_a/b/a_fold"/>
</dbReference>
<dbReference type="InterPro" id="IPR011063">
    <property type="entry name" value="TilS/TtcA_N"/>
</dbReference>
<dbReference type="InterPro" id="IPR012089">
    <property type="entry name" value="tRNA_Cyd_32_2_STrfase"/>
</dbReference>
<dbReference type="InterPro" id="IPR035107">
    <property type="entry name" value="tRNA_thiolation_TtcA_Ctu1"/>
</dbReference>
<dbReference type="NCBIfam" id="NF007972">
    <property type="entry name" value="PRK10696.1"/>
    <property type="match status" value="1"/>
</dbReference>
<dbReference type="PANTHER" id="PTHR43686:SF1">
    <property type="entry name" value="AMINOTRAN_5 DOMAIN-CONTAINING PROTEIN"/>
    <property type="match status" value="1"/>
</dbReference>
<dbReference type="PANTHER" id="PTHR43686">
    <property type="entry name" value="SULFURTRANSFERASE-RELATED"/>
    <property type="match status" value="1"/>
</dbReference>
<dbReference type="Pfam" id="PF01171">
    <property type="entry name" value="ATP_bind_3"/>
    <property type="match status" value="1"/>
</dbReference>
<dbReference type="PIRSF" id="PIRSF004976">
    <property type="entry name" value="ATPase_YdaO"/>
    <property type="match status" value="1"/>
</dbReference>
<dbReference type="SUPFAM" id="SSF52402">
    <property type="entry name" value="Adenine nucleotide alpha hydrolases-like"/>
    <property type="match status" value="1"/>
</dbReference>
<name>TTCA_ECOHS</name>